<protein>
    <recommendedName>
        <fullName evidence="1">Queuine tRNA-ribosyltransferase</fullName>
        <ecNumber evidence="1">2.4.2.29</ecNumber>
    </recommendedName>
    <alternativeName>
        <fullName evidence="1">Guanine insertion enzyme</fullName>
    </alternativeName>
    <alternativeName>
        <fullName evidence="1">tRNA-guanine transglycosylase</fullName>
    </alternativeName>
</protein>
<sequence>MSKFSFNIHHQHKKARSGIIVTAHGEMRTPAFMPVGTRGTVKAMLPESVAETGADILLGNTYHLMLQPTAERIVQLGGLHKFMNWDKPILTDSGGFQVMSLSKLCKITEEGVSFSSHINGDKYMLTPERSTEIQYLLGSTITMAFDECTPYPATFEEAKTSMQLTTRWANRSRNTFVKREGYAQFGIIQGSVYEELREQSAKDLVELDFDGYAIGGLAVGEGQELMFKVLDYAPDFLPQNKPRYLMGVGKPADIIGAVSRGIDMFDCVIPTRSGRNGQAFTKYGTVNIRNSKYADDNKPLEHDCLCPACRNYSKAYLHHLVRIGEILGSMLMTWHNLTYFQNLMSRIRAYIKLGKDFDFDS</sequence>
<dbReference type="EC" id="2.4.2.29" evidence="1"/>
<dbReference type="EMBL" id="CP000848">
    <property type="protein sequence ID" value="ABV76679.1"/>
    <property type="molecule type" value="Genomic_DNA"/>
</dbReference>
<dbReference type="RefSeq" id="WP_012151231.1">
    <property type="nucleotide sequence ID" value="NZ_CP121767.1"/>
</dbReference>
<dbReference type="SMR" id="A8GTF4"/>
<dbReference type="GeneID" id="79937744"/>
<dbReference type="KEGG" id="rri:A1G_06095"/>
<dbReference type="HOGENOM" id="CLU_022060_0_1_5"/>
<dbReference type="UniPathway" id="UPA00392"/>
<dbReference type="Proteomes" id="UP000006832">
    <property type="component" value="Chromosome"/>
</dbReference>
<dbReference type="GO" id="GO:0005737">
    <property type="term" value="C:cytoplasm"/>
    <property type="evidence" value="ECO:0007669"/>
    <property type="project" value="TreeGrafter"/>
</dbReference>
<dbReference type="GO" id="GO:0046872">
    <property type="term" value="F:metal ion binding"/>
    <property type="evidence" value="ECO:0007669"/>
    <property type="project" value="UniProtKB-KW"/>
</dbReference>
<dbReference type="GO" id="GO:0008479">
    <property type="term" value="F:tRNA-guanosine(34) queuine transglycosylase activity"/>
    <property type="evidence" value="ECO:0007669"/>
    <property type="project" value="UniProtKB-UniRule"/>
</dbReference>
<dbReference type="GO" id="GO:0008616">
    <property type="term" value="P:queuosine biosynthetic process"/>
    <property type="evidence" value="ECO:0007669"/>
    <property type="project" value="UniProtKB-UniRule"/>
</dbReference>
<dbReference type="GO" id="GO:0002099">
    <property type="term" value="P:tRNA wobble guanine modification"/>
    <property type="evidence" value="ECO:0007669"/>
    <property type="project" value="TreeGrafter"/>
</dbReference>
<dbReference type="GO" id="GO:0101030">
    <property type="term" value="P:tRNA-guanine transglycosylation"/>
    <property type="evidence" value="ECO:0007669"/>
    <property type="project" value="InterPro"/>
</dbReference>
<dbReference type="FunFam" id="3.20.20.105:FF:000001">
    <property type="entry name" value="Queuine tRNA-ribosyltransferase"/>
    <property type="match status" value="1"/>
</dbReference>
<dbReference type="Gene3D" id="3.20.20.105">
    <property type="entry name" value="Queuine tRNA-ribosyltransferase-like"/>
    <property type="match status" value="1"/>
</dbReference>
<dbReference type="HAMAP" id="MF_00168">
    <property type="entry name" value="Q_tRNA_Tgt"/>
    <property type="match status" value="1"/>
</dbReference>
<dbReference type="InterPro" id="IPR050076">
    <property type="entry name" value="ArchSynthase1/Queuine_TRR"/>
</dbReference>
<dbReference type="InterPro" id="IPR004803">
    <property type="entry name" value="TGT"/>
</dbReference>
<dbReference type="InterPro" id="IPR036511">
    <property type="entry name" value="TGT-like_sf"/>
</dbReference>
<dbReference type="InterPro" id="IPR002616">
    <property type="entry name" value="tRNA_ribo_trans-like"/>
</dbReference>
<dbReference type="NCBIfam" id="TIGR00430">
    <property type="entry name" value="Q_tRNA_tgt"/>
    <property type="match status" value="1"/>
</dbReference>
<dbReference type="NCBIfam" id="TIGR00449">
    <property type="entry name" value="tgt_general"/>
    <property type="match status" value="1"/>
</dbReference>
<dbReference type="PANTHER" id="PTHR46499">
    <property type="entry name" value="QUEUINE TRNA-RIBOSYLTRANSFERASE"/>
    <property type="match status" value="1"/>
</dbReference>
<dbReference type="PANTHER" id="PTHR46499:SF1">
    <property type="entry name" value="QUEUINE TRNA-RIBOSYLTRANSFERASE"/>
    <property type="match status" value="1"/>
</dbReference>
<dbReference type="Pfam" id="PF01702">
    <property type="entry name" value="TGT"/>
    <property type="match status" value="1"/>
</dbReference>
<dbReference type="SUPFAM" id="SSF51713">
    <property type="entry name" value="tRNA-guanine transglycosylase"/>
    <property type="match status" value="1"/>
</dbReference>
<organism>
    <name type="scientific">Rickettsia rickettsii (strain Sheila Smith)</name>
    <dbReference type="NCBI Taxonomy" id="392021"/>
    <lineage>
        <taxon>Bacteria</taxon>
        <taxon>Pseudomonadati</taxon>
        <taxon>Pseudomonadota</taxon>
        <taxon>Alphaproteobacteria</taxon>
        <taxon>Rickettsiales</taxon>
        <taxon>Rickettsiaceae</taxon>
        <taxon>Rickettsieae</taxon>
        <taxon>Rickettsia</taxon>
        <taxon>spotted fever group</taxon>
    </lineage>
</organism>
<evidence type="ECO:0000255" key="1">
    <source>
        <dbReference type="HAMAP-Rule" id="MF_00168"/>
    </source>
</evidence>
<accession>A8GTF4</accession>
<name>TGT_RICRS</name>
<feature type="chain" id="PRO_1000016839" description="Queuine tRNA-ribosyltransferase">
    <location>
        <begin position="1"/>
        <end position="361"/>
    </location>
</feature>
<feature type="region of interest" description="RNA binding" evidence="1">
    <location>
        <begin position="247"/>
        <end position="253"/>
    </location>
</feature>
<feature type="region of interest" description="RNA binding; important for wobble base 34 recognition" evidence="1">
    <location>
        <begin position="271"/>
        <end position="275"/>
    </location>
</feature>
<feature type="active site" description="Proton acceptor" evidence="1">
    <location>
        <position position="92"/>
    </location>
</feature>
<feature type="active site" description="Nucleophile" evidence="1">
    <location>
        <position position="266"/>
    </location>
</feature>
<feature type="binding site" evidence="1">
    <location>
        <begin position="92"/>
        <end position="96"/>
    </location>
    <ligand>
        <name>substrate</name>
    </ligand>
</feature>
<feature type="binding site" evidence="1">
    <location>
        <position position="146"/>
    </location>
    <ligand>
        <name>substrate</name>
    </ligand>
</feature>
<feature type="binding site" evidence="1">
    <location>
        <position position="189"/>
    </location>
    <ligand>
        <name>substrate</name>
    </ligand>
</feature>
<feature type="binding site" evidence="1">
    <location>
        <position position="216"/>
    </location>
    <ligand>
        <name>substrate</name>
    </ligand>
</feature>
<feature type="binding site" evidence="1">
    <location>
        <position position="304"/>
    </location>
    <ligand>
        <name>Zn(2+)</name>
        <dbReference type="ChEBI" id="CHEBI:29105"/>
    </ligand>
</feature>
<feature type="binding site" evidence="1">
    <location>
        <position position="306"/>
    </location>
    <ligand>
        <name>Zn(2+)</name>
        <dbReference type="ChEBI" id="CHEBI:29105"/>
    </ligand>
</feature>
<feature type="binding site" evidence="1">
    <location>
        <position position="309"/>
    </location>
    <ligand>
        <name>Zn(2+)</name>
        <dbReference type="ChEBI" id="CHEBI:29105"/>
    </ligand>
</feature>
<feature type="binding site" evidence="1">
    <location>
        <position position="335"/>
    </location>
    <ligand>
        <name>Zn(2+)</name>
        <dbReference type="ChEBI" id="CHEBI:29105"/>
    </ligand>
</feature>
<proteinExistence type="inferred from homology"/>
<gene>
    <name evidence="1" type="primary">tgt</name>
    <name type="ordered locus">A1G_06095</name>
</gene>
<keyword id="KW-0328">Glycosyltransferase</keyword>
<keyword id="KW-0479">Metal-binding</keyword>
<keyword id="KW-0671">Queuosine biosynthesis</keyword>
<keyword id="KW-0808">Transferase</keyword>
<keyword id="KW-0819">tRNA processing</keyword>
<keyword id="KW-0862">Zinc</keyword>
<comment type="function">
    <text evidence="1">Catalyzes the base-exchange of a guanine (G) residue with the queuine precursor 7-aminomethyl-7-deazaguanine (PreQ1) at position 34 (anticodon wobble position) in tRNAs with GU(N) anticodons (tRNA-Asp, -Asn, -His and -Tyr). Catalysis occurs through a double-displacement mechanism. The nucleophile active site attacks the C1' of nucleotide 34 to detach the guanine base from the RNA, forming a covalent enzyme-RNA intermediate. The proton acceptor active site deprotonates the incoming PreQ1, allowing a nucleophilic attack on the C1' of the ribose to form the product. After dissociation, two additional enzymatic reactions on the tRNA convert PreQ1 to queuine (Q), resulting in the hypermodified nucleoside queuosine (7-(((4,5-cis-dihydroxy-2-cyclopenten-1-yl)amino)methyl)-7-deazaguanosine).</text>
</comment>
<comment type="catalytic activity">
    <reaction evidence="1">
        <text>7-aminomethyl-7-carbaguanine + guanosine(34) in tRNA = 7-aminomethyl-7-carbaguanosine(34) in tRNA + guanine</text>
        <dbReference type="Rhea" id="RHEA:24104"/>
        <dbReference type="Rhea" id="RHEA-COMP:10341"/>
        <dbReference type="Rhea" id="RHEA-COMP:10342"/>
        <dbReference type="ChEBI" id="CHEBI:16235"/>
        <dbReference type="ChEBI" id="CHEBI:58703"/>
        <dbReference type="ChEBI" id="CHEBI:74269"/>
        <dbReference type="ChEBI" id="CHEBI:82833"/>
        <dbReference type="EC" id="2.4.2.29"/>
    </reaction>
</comment>
<comment type="cofactor">
    <cofactor evidence="1">
        <name>Zn(2+)</name>
        <dbReference type="ChEBI" id="CHEBI:29105"/>
    </cofactor>
    <text evidence="1">Binds 1 zinc ion per subunit.</text>
</comment>
<comment type="pathway">
    <text evidence="1">tRNA modification; tRNA-queuosine biosynthesis.</text>
</comment>
<comment type="subunit">
    <text evidence="1">Homodimer. Within each dimer, one monomer is responsible for RNA recognition and catalysis, while the other monomer binds to the replacement base PreQ1.</text>
</comment>
<comment type="similarity">
    <text evidence="1">Belongs to the queuine tRNA-ribosyltransferase family.</text>
</comment>
<reference key="1">
    <citation type="submission" date="2007-09" db="EMBL/GenBank/DDBJ databases">
        <title>Complete genome sequence of Rickettsia rickettsii.</title>
        <authorList>
            <person name="Madan A."/>
            <person name="Fahey J."/>
            <person name="Helton E."/>
            <person name="Ketteman M."/>
            <person name="Madan A."/>
            <person name="Rodrigues S."/>
            <person name="Sanchez A."/>
            <person name="Dasch G."/>
            <person name="Eremeeva M."/>
        </authorList>
    </citation>
    <scope>NUCLEOTIDE SEQUENCE [LARGE SCALE GENOMIC DNA]</scope>
    <source>
        <strain>Sheila Smith</strain>
    </source>
</reference>